<evidence type="ECO:0000255" key="1">
    <source>
        <dbReference type="HAMAP-Rule" id="MF_00076"/>
    </source>
</evidence>
<feature type="chain" id="PRO_1000190608" description="Imidazoleglycerol-phosphate dehydratase">
    <location>
        <begin position="1"/>
        <end position="194"/>
    </location>
</feature>
<gene>
    <name evidence="1" type="primary">hisB</name>
    <name type="ordered locus">Ctha_1863</name>
</gene>
<proteinExistence type="inferred from homology"/>
<organism>
    <name type="scientific">Chloroherpeton thalassium (strain ATCC 35110 / GB-78)</name>
    <dbReference type="NCBI Taxonomy" id="517418"/>
    <lineage>
        <taxon>Bacteria</taxon>
        <taxon>Pseudomonadati</taxon>
        <taxon>Chlorobiota</taxon>
        <taxon>Chlorobiia</taxon>
        <taxon>Chlorobiales</taxon>
        <taxon>Chloroherpetonaceae</taxon>
        <taxon>Chloroherpeton</taxon>
    </lineage>
</organism>
<protein>
    <recommendedName>
        <fullName evidence="1">Imidazoleglycerol-phosphate dehydratase</fullName>
        <shortName evidence="1">IGPD</shortName>
        <ecNumber evidence="1">4.2.1.19</ecNumber>
    </recommendedName>
</protein>
<comment type="catalytic activity">
    <reaction evidence="1">
        <text>D-erythro-1-(imidazol-4-yl)glycerol 3-phosphate = 3-(imidazol-4-yl)-2-oxopropyl phosphate + H2O</text>
        <dbReference type="Rhea" id="RHEA:11040"/>
        <dbReference type="ChEBI" id="CHEBI:15377"/>
        <dbReference type="ChEBI" id="CHEBI:57766"/>
        <dbReference type="ChEBI" id="CHEBI:58278"/>
        <dbReference type="EC" id="4.2.1.19"/>
    </reaction>
</comment>
<comment type="pathway">
    <text evidence="1">Amino-acid biosynthesis; L-histidine biosynthesis; L-histidine from 5-phospho-alpha-D-ribose 1-diphosphate: step 6/9.</text>
</comment>
<comment type="subcellular location">
    <subcellularLocation>
        <location evidence="1">Cytoplasm</location>
    </subcellularLocation>
</comment>
<comment type="similarity">
    <text evidence="1">Belongs to the imidazoleglycerol-phosphate dehydratase family.</text>
</comment>
<dbReference type="EC" id="4.2.1.19" evidence="1"/>
<dbReference type="EMBL" id="CP001100">
    <property type="protein sequence ID" value="ACF14320.1"/>
    <property type="molecule type" value="Genomic_DNA"/>
</dbReference>
<dbReference type="RefSeq" id="WP_012500404.1">
    <property type="nucleotide sequence ID" value="NC_011026.1"/>
</dbReference>
<dbReference type="SMR" id="B3QTX2"/>
<dbReference type="STRING" id="517418.Ctha_1863"/>
<dbReference type="KEGG" id="cts:Ctha_1863"/>
<dbReference type="eggNOG" id="COG0131">
    <property type="taxonomic scope" value="Bacteria"/>
</dbReference>
<dbReference type="HOGENOM" id="CLU_044308_3_0_10"/>
<dbReference type="OrthoDB" id="9790411at2"/>
<dbReference type="UniPathway" id="UPA00031">
    <property type="reaction ID" value="UER00011"/>
</dbReference>
<dbReference type="Proteomes" id="UP000001208">
    <property type="component" value="Chromosome"/>
</dbReference>
<dbReference type="GO" id="GO:0005737">
    <property type="term" value="C:cytoplasm"/>
    <property type="evidence" value="ECO:0007669"/>
    <property type="project" value="UniProtKB-SubCell"/>
</dbReference>
<dbReference type="GO" id="GO:0004424">
    <property type="term" value="F:imidazoleglycerol-phosphate dehydratase activity"/>
    <property type="evidence" value="ECO:0007669"/>
    <property type="project" value="UniProtKB-UniRule"/>
</dbReference>
<dbReference type="GO" id="GO:0000105">
    <property type="term" value="P:L-histidine biosynthetic process"/>
    <property type="evidence" value="ECO:0007669"/>
    <property type="project" value="UniProtKB-UniRule"/>
</dbReference>
<dbReference type="CDD" id="cd07914">
    <property type="entry name" value="IGPD"/>
    <property type="match status" value="1"/>
</dbReference>
<dbReference type="FunFam" id="3.30.230.40:FF:000001">
    <property type="entry name" value="Imidazoleglycerol-phosphate dehydratase HisB"/>
    <property type="match status" value="1"/>
</dbReference>
<dbReference type="FunFam" id="3.30.230.40:FF:000003">
    <property type="entry name" value="Imidazoleglycerol-phosphate dehydratase HisB"/>
    <property type="match status" value="1"/>
</dbReference>
<dbReference type="Gene3D" id="3.30.230.40">
    <property type="entry name" value="Imidazole glycerol phosphate dehydratase, domain 1"/>
    <property type="match status" value="2"/>
</dbReference>
<dbReference type="HAMAP" id="MF_00076">
    <property type="entry name" value="HisB"/>
    <property type="match status" value="1"/>
</dbReference>
<dbReference type="InterPro" id="IPR038494">
    <property type="entry name" value="IGPD_sf"/>
</dbReference>
<dbReference type="InterPro" id="IPR000807">
    <property type="entry name" value="ImidazoleglycerolP_deHydtase"/>
</dbReference>
<dbReference type="InterPro" id="IPR020565">
    <property type="entry name" value="ImidazoleglycerP_deHydtase_CS"/>
</dbReference>
<dbReference type="InterPro" id="IPR020568">
    <property type="entry name" value="Ribosomal_Su5_D2-typ_SF"/>
</dbReference>
<dbReference type="NCBIfam" id="NF002111">
    <property type="entry name" value="PRK00951.2-1"/>
    <property type="match status" value="1"/>
</dbReference>
<dbReference type="NCBIfam" id="NF002114">
    <property type="entry name" value="PRK00951.2-4"/>
    <property type="match status" value="1"/>
</dbReference>
<dbReference type="PANTHER" id="PTHR23133:SF2">
    <property type="entry name" value="IMIDAZOLEGLYCEROL-PHOSPHATE DEHYDRATASE"/>
    <property type="match status" value="1"/>
</dbReference>
<dbReference type="PANTHER" id="PTHR23133">
    <property type="entry name" value="IMIDAZOLEGLYCEROL-PHOSPHATE DEHYDRATASE HIS7"/>
    <property type="match status" value="1"/>
</dbReference>
<dbReference type="Pfam" id="PF00475">
    <property type="entry name" value="IGPD"/>
    <property type="match status" value="1"/>
</dbReference>
<dbReference type="SUPFAM" id="SSF54211">
    <property type="entry name" value="Ribosomal protein S5 domain 2-like"/>
    <property type="match status" value="2"/>
</dbReference>
<dbReference type="PROSITE" id="PS00954">
    <property type="entry name" value="IGP_DEHYDRATASE_1"/>
    <property type="match status" value="1"/>
</dbReference>
<dbReference type="PROSITE" id="PS00955">
    <property type="entry name" value="IGP_DEHYDRATASE_2"/>
    <property type="match status" value="1"/>
</dbReference>
<sequence>MPKRRARVTRKTKETDIAIELVLDGNGKYEIQSGIRFLDHMLESFSKHSRIDIALTCTGDVDVDDHHSIEDIAIVLGSAISQALGDKRGIQRYGWAIIPMDESLARAAIDLSGRSYLFFDAVFDRPTVSDLSTEMVEHFFFSLAEHLKANIHLEILHGKNTHHKVEALFKSLAVAMREAVKITSNEVLSTKGVI</sequence>
<keyword id="KW-0028">Amino-acid biosynthesis</keyword>
<keyword id="KW-0963">Cytoplasm</keyword>
<keyword id="KW-0368">Histidine biosynthesis</keyword>
<keyword id="KW-0456">Lyase</keyword>
<keyword id="KW-1185">Reference proteome</keyword>
<reference key="1">
    <citation type="submission" date="2008-06" db="EMBL/GenBank/DDBJ databases">
        <title>Complete sequence of Chloroherpeton thalassium ATCC 35110.</title>
        <authorList>
            <consortium name="US DOE Joint Genome Institute"/>
            <person name="Lucas S."/>
            <person name="Copeland A."/>
            <person name="Lapidus A."/>
            <person name="Glavina del Rio T."/>
            <person name="Dalin E."/>
            <person name="Tice H."/>
            <person name="Bruce D."/>
            <person name="Goodwin L."/>
            <person name="Pitluck S."/>
            <person name="Schmutz J."/>
            <person name="Larimer F."/>
            <person name="Land M."/>
            <person name="Hauser L."/>
            <person name="Kyrpides N."/>
            <person name="Mikhailova N."/>
            <person name="Liu Z."/>
            <person name="Li T."/>
            <person name="Zhao F."/>
            <person name="Overmann J."/>
            <person name="Bryant D.A."/>
            <person name="Richardson P."/>
        </authorList>
    </citation>
    <scope>NUCLEOTIDE SEQUENCE [LARGE SCALE GENOMIC DNA]</scope>
    <source>
        <strain>ATCC 35110 / GB-78</strain>
    </source>
</reference>
<accession>B3QTX2</accession>
<name>HIS7_CHLT3</name>